<protein>
    <recommendedName>
        <fullName>T-cell receptor alpha chain constant</fullName>
    </recommendedName>
</protein>
<gene>
    <name evidence="4" type="primary">Trac</name>
</gene>
<organism>
    <name type="scientific">Mus musculus</name>
    <name type="common">Mouse</name>
    <dbReference type="NCBI Taxonomy" id="10090"/>
    <lineage>
        <taxon>Eukaryota</taxon>
        <taxon>Metazoa</taxon>
        <taxon>Chordata</taxon>
        <taxon>Craniata</taxon>
        <taxon>Vertebrata</taxon>
        <taxon>Euteleostomi</taxon>
        <taxon>Mammalia</taxon>
        <taxon>Eutheria</taxon>
        <taxon>Euarchontoglires</taxon>
        <taxon>Glires</taxon>
        <taxon>Rodentia</taxon>
        <taxon>Myomorpha</taxon>
        <taxon>Muroidea</taxon>
        <taxon>Muridae</taxon>
        <taxon>Murinae</taxon>
        <taxon>Mus</taxon>
        <taxon>Mus</taxon>
    </lineage>
</organism>
<name>TRAC_MOUSE</name>
<feature type="chain" id="PRO_0000184525" description="T-cell receptor alpha chain constant">
    <location>
        <begin position="1" status="less than"/>
        <end position="136"/>
    </location>
</feature>
<feature type="transmembrane region" description="Helical" evidence="2">
    <location>
        <begin position="111"/>
        <end position="131"/>
    </location>
</feature>
<feature type="topological domain" description="Cytoplasmic" evidence="2">
    <location>
        <begin position="132"/>
        <end position="136"/>
    </location>
</feature>
<feature type="domain" description="Ig-like C1-type" evidence="3">
    <location>
        <begin position="19"/>
        <end position="103"/>
    </location>
</feature>
<feature type="region of interest" description="Connecting peptide" evidence="1">
    <location>
        <begin position="90"/>
        <end position="111"/>
    </location>
</feature>
<feature type="glycosylation site" description="N-linked (GlcNAc...) asparagine" evidence="2">
    <location>
        <position position="66"/>
    </location>
</feature>
<feature type="glycosylation site" description="N-linked (GlcNAc...) asparagine" evidence="2">
    <location>
        <position position="80"/>
    </location>
</feature>
<feature type="glycosylation site" description="N-linked (GlcNAc...) asparagine" evidence="2">
    <location>
        <position position="109"/>
    </location>
</feature>
<feature type="disulfide bond" evidence="1">
    <location>
        <begin position="22"/>
        <end position="72"/>
    </location>
</feature>
<feature type="non-terminal residue">
    <location>
        <position position="1"/>
    </location>
</feature>
<feature type="strand" evidence="7">
    <location>
        <begin position="7"/>
        <end position="12"/>
    </location>
</feature>
<feature type="strand" evidence="7">
    <location>
        <begin position="16"/>
        <end position="18"/>
    </location>
</feature>
<feature type="strand" evidence="7">
    <location>
        <begin position="20"/>
        <end position="26"/>
    </location>
</feature>
<feature type="strand" evidence="6">
    <location>
        <begin position="29"/>
        <end position="31"/>
    </location>
</feature>
<feature type="strand" evidence="5">
    <location>
        <begin position="38"/>
        <end position="40"/>
    </location>
</feature>
<feature type="strand" evidence="7">
    <location>
        <begin position="41"/>
        <end position="43"/>
    </location>
</feature>
<feature type="strand" evidence="7">
    <location>
        <begin position="47"/>
        <end position="51"/>
    </location>
</feature>
<feature type="turn" evidence="7">
    <location>
        <begin position="52"/>
        <end position="55"/>
    </location>
</feature>
<feature type="strand" evidence="7">
    <location>
        <begin position="56"/>
        <end position="66"/>
    </location>
</feature>
<feature type="helix" evidence="7">
    <location>
        <begin position="72"/>
        <end position="75"/>
    </location>
</feature>
<feature type="helix" evidence="8">
    <location>
        <begin position="107"/>
        <end position="123"/>
    </location>
</feature>
<feature type="turn" evidence="8">
    <location>
        <begin position="124"/>
        <end position="126"/>
    </location>
</feature>
<feature type="helix" evidence="8">
    <location>
        <begin position="127"/>
        <end position="131"/>
    </location>
</feature>
<proteinExistence type="evidence at protein level"/>
<evidence type="ECO:0000250" key="1">
    <source>
        <dbReference type="UniProtKB" id="P01848"/>
    </source>
</evidence>
<evidence type="ECO:0000255" key="2"/>
<evidence type="ECO:0000255" key="3">
    <source>
        <dbReference type="PROSITE-ProRule" id="PRU00114"/>
    </source>
</evidence>
<evidence type="ECO:0000312" key="4">
    <source>
        <dbReference type="MGI" id="MGI:4439838"/>
    </source>
</evidence>
<evidence type="ECO:0007829" key="5">
    <source>
        <dbReference type="PDB" id="2JCC"/>
    </source>
</evidence>
<evidence type="ECO:0007829" key="6">
    <source>
        <dbReference type="PDB" id="5M01"/>
    </source>
</evidence>
<evidence type="ECO:0007829" key="7">
    <source>
        <dbReference type="PDB" id="5M02"/>
    </source>
</evidence>
<evidence type="ECO:0007829" key="8">
    <source>
        <dbReference type="PDB" id="6MF8"/>
    </source>
</evidence>
<accession>P01849</accession>
<accession>A0A075B662</accession>
<sequence>IQNPEPAVYQLKDPRSQDSTLCLFTDFDSQINVPKTMESGTFITDKTVLDMKAMDSKSNGAIAWSNQTSFTCQDIFKETNATYPSSDVPCDATLTEKSFETDMNLNFQNLSVMGLRILLLKVAGFNLLMTLRLWSS</sequence>
<comment type="function">
    <text evidence="1">Constant region of T cell receptor (TR) alpha chain. Alpha-beta T cell receptors are antigen specific receptors which are essential to the immune response and are present on the cell surface of T lymphocytes. Recognize peptide-major histocompatibility (MH) (pMH) complexes that are displayed by antigen presenting cells (APC), a prerequisite for efficient T cell adaptive immunity against pathogens. Binding of alpha-beta TR to pMH complex initiates TR-CD3 clustering on the cell surface and intracellular activation of LCK that phosphorylates the ITAM motifs of CD3G, CD3D, CD3E and CD247 enabling the recruitment of ZAP70. In turn, ZAP70 phosphorylates LAT, which recruits numerous signaling molecules to form the LAT signalosome. The LAT signalosome propagates signal branching to three major signaling pathways, the calcium, the mitogen-activated protein kinase (MAPK) kinase and the nuclear factor NF-kappa-B (NF-kB) pathways, leading to the mobilization of transcription factors that are critical for gene expression and essential for T cell growth and differentiation. The T cell repertoire is generated in the thymus, by V-(D)-J rearrangement. This repertoire is then shaped by intrathymic selection events to generate a peripheral T cell pool of self-MH restricted, non-autoaggressive T cells. Post-thymic interaction of alpha-beta TR with the pMH complexes shapes TR structural and functional avidity.</text>
</comment>
<comment type="subunit">
    <text evidence="1">Alpha-beta TR is a heterodimer composed of an alpha and beta chain; disulfide-linked. The alpha-beta TR is associated with the transmembrane signaling CD3 coreceptor proteins to form the TR-CD3 (TcR or TCR). The assembly of alpha-beta TR heterodimers with CD3 occurs in the endoplasmic reticulum where a single alpha-beta TR heterodimer associates with one CD3D-CD3E heterodimer, one CD3G-CD3E heterodimer and one CD247 homodimer forming a stable octameric structure. CD3D-CD3E and CD3G-CD3E heterodimers preferentially associate with TR alpha and TR beta chains, respectively. The association of the CD247 homodimer is the last step of TcR assembly in the endoplasmic reticulum and is required for transport to the cell surface.</text>
</comment>
<comment type="subcellular location">
    <subcellularLocation>
        <location evidence="1">Cell membrane</location>
    </subcellularLocation>
</comment>
<comment type="domain">
    <text evidence="1">The connecting peptide (CP) domain contributes to the TR-CD3 assembly and signal transduction.</text>
</comment>
<comment type="domain">
    <text evidence="1">The TM domain mediates the interaction with the CD3 subunits.</text>
</comment>
<dbReference type="EMBL" id="U07662">
    <property type="protein sequence ID" value="AAA53226.1"/>
    <property type="molecule type" value="mRNA"/>
</dbReference>
<dbReference type="PIR" id="S25117">
    <property type="entry name" value="RWMSC8"/>
</dbReference>
<dbReference type="PDB" id="1LP9">
    <property type="method" value="X-ray"/>
    <property type="resolution" value="2.00 A"/>
    <property type="chains" value="E/L=1-79"/>
</dbReference>
<dbReference type="PDB" id="1NFD">
    <property type="method" value="X-ray"/>
    <property type="resolution" value="2.80 A"/>
    <property type="chains" value="A/C=1-90"/>
</dbReference>
<dbReference type="PDB" id="2J8U">
    <property type="method" value="X-ray"/>
    <property type="resolution" value="2.88 A"/>
    <property type="chains" value="E/L=1-79"/>
</dbReference>
<dbReference type="PDB" id="2JCC">
    <property type="method" value="X-ray"/>
    <property type="resolution" value="2.50 A"/>
    <property type="chains" value="E/L=1-79"/>
</dbReference>
<dbReference type="PDB" id="2Q86">
    <property type="method" value="X-ray"/>
    <property type="resolution" value="1.85 A"/>
    <property type="chains" value="A/C=1-81"/>
</dbReference>
<dbReference type="PDB" id="3C6L">
    <property type="method" value="X-ray"/>
    <property type="resolution" value="3.40 A"/>
    <property type="chains" value="A/E=1-76"/>
</dbReference>
<dbReference type="PDB" id="3MBE">
    <property type="method" value="X-ray"/>
    <property type="resolution" value="2.89 A"/>
    <property type="chains" value="C/G=1-82"/>
</dbReference>
<dbReference type="PDB" id="5M01">
    <property type="method" value="X-ray"/>
    <property type="resolution" value="1.95 A"/>
    <property type="chains" value="G=1-77"/>
</dbReference>
<dbReference type="PDB" id="5M02">
    <property type="method" value="X-ray"/>
    <property type="resolution" value="1.75 A"/>
    <property type="chains" value="G=1-77"/>
</dbReference>
<dbReference type="PDB" id="6G9Q">
    <property type="method" value="X-ray"/>
    <property type="resolution" value="1.89 A"/>
    <property type="chains" value="G=1-86"/>
</dbReference>
<dbReference type="PDB" id="6MF8">
    <property type="method" value="NMR"/>
    <property type="chains" value="A=91-136"/>
</dbReference>
<dbReference type="PDB" id="8WTE">
    <property type="method" value="X-ray"/>
    <property type="resolution" value="2.17 A"/>
    <property type="chains" value="A/C=1-86"/>
</dbReference>
<dbReference type="PDB" id="8WUL">
    <property type="method" value="X-ray"/>
    <property type="resolution" value="2.36 A"/>
    <property type="chains" value="A/C/E/G=1-86"/>
</dbReference>
<dbReference type="PDBsum" id="1LP9"/>
<dbReference type="PDBsum" id="1NFD"/>
<dbReference type="PDBsum" id="2J8U"/>
<dbReference type="PDBsum" id="2JCC"/>
<dbReference type="PDBsum" id="2Q86"/>
<dbReference type="PDBsum" id="3C6L"/>
<dbReference type="PDBsum" id="3MBE"/>
<dbReference type="PDBsum" id="5M01"/>
<dbReference type="PDBsum" id="5M02"/>
<dbReference type="PDBsum" id="6G9Q"/>
<dbReference type="PDBsum" id="6MF8"/>
<dbReference type="PDBsum" id="8WTE"/>
<dbReference type="PDBsum" id="8WUL"/>
<dbReference type="BMRB" id="P01849"/>
<dbReference type="SMR" id="P01849"/>
<dbReference type="FunCoup" id="P01849">
    <property type="interactions" value="59"/>
</dbReference>
<dbReference type="IntAct" id="P01849">
    <property type="interactions" value="1"/>
</dbReference>
<dbReference type="GlyCosmos" id="P01849">
    <property type="glycosylation" value="3 sites, No reported glycans"/>
</dbReference>
<dbReference type="GlyGen" id="P01849">
    <property type="glycosylation" value="3 sites"/>
</dbReference>
<dbReference type="PhosphoSitePlus" id="P01849"/>
<dbReference type="ProteomicsDB" id="263144"/>
<dbReference type="ProteomicsDB" id="333055"/>
<dbReference type="ABCD" id="P01849">
    <property type="antibodies" value="2 sequenced antibodies"/>
</dbReference>
<dbReference type="UCSC" id="uc007tub.2">
    <property type="organism name" value="mouse"/>
</dbReference>
<dbReference type="UCSC" id="uc007tuz.3">
    <property type="organism name" value="mouse"/>
</dbReference>
<dbReference type="MGI" id="MGI:4439838">
    <property type="gene designation" value="Trac"/>
</dbReference>
<dbReference type="VEuPathDB" id="HostDB:ENSMUSG00000076928"/>
<dbReference type="InParanoid" id="P01849"/>
<dbReference type="OMA" id="CNATLIE"/>
<dbReference type="Reactome" id="R-MMU-198933">
    <property type="pathway name" value="Immunoregulatory interactions between a Lymphoid and a non-Lymphoid cell"/>
</dbReference>
<dbReference type="Reactome" id="R-MMU-202424">
    <property type="pathway name" value="Downstream TCR signaling"/>
</dbReference>
<dbReference type="Reactome" id="R-MMU-202427">
    <property type="pathway name" value="Phosphorylation of CD3 and TCR zeta chains"/>
</dbReference>
<dbReference type="Reactome" id="R-MMU-202430">
    <property type="pathway name" value="Translocation of ZAP-70 to Immunological synapse"/>
</dbReference>
<dbReference type="Reactome" id="R-MMU-202433">
    <property type="pathway name" value="Generation of second messenger molecules"/>
</dbReference>
<dbReference type="Reactome" id="R-MMU-389948">
    <property type="pathway name" value="Co-inhibition by PD-1"/>
</dbReference>
<dbReference type="ChiTaRS" id="Tcra">
    <property type="organism name" value="mouse"/>
</dbReference>
<dbReference type="ChiTaRS" id="Trac">
    <property type="organism name" value="mouse"/>
</dbReference>
<dbReference type="EvolutionaryTrace" id="P01849"/>
<dbReference type="PRO" id="PR:P01849"/>
<dbReference type="Proteomes" id="UP000000589">
    <property type="component" value="Chromosome 14"/>
</dbReference>
<dbReference type="RNAct" id="P01849">
    <property type="molecule type" value="protein"/>
</dbReference>
<dbReference type="Bgee" id="ENSMUSG00000076928">
    <property type="expression patterns" value="Expressed in thymus and 164 other cell types or tissues"/>
</dbReference>
<dbReference type="GO" id="GO:0042101">
    <property type="term" value="C:T cell receptor complex"/>
    <property type="evidence" value="ECO:0007669"/>
    <property type="project" value="UniProtKB-KW"/>
</dbReference>
<dbReference type="GO" id="GO:0002250">
    <property type="term" value="P:adaptive immune response"/>
    <property type="evidence" value="ECO:0007669"/>
    <property type="project" value="UniProtKB-KW"/>
</dbReference>
<dbReference type="CDD" id="cd07688">
    <property type="entry name" value="IgC_TCR_alpha"/>
    <property type="match status" value="1"/>
</dbReference>
<dbReference type="Gene3D" id="2.60.40.10">
    <property type="entry name" value="Immunoglobulins"/>
    <property type="match status" value="1"/>
</dbReference>
<dbReference type="InterPro" id="IPR036179">
    <property type="entry name" value="Ig-like_dom_sf"/>
</dbReference>
<dbReference type="InterPro" id="IPR013783">
    <property type="entry name" value="Ig-like_fold"/>
</dbReference>
<dbReference type="InterPro" id="IPR015370">
    <property type="entry name" value="TCR_alpha_C"/>
</dbReference>
<dbReference type="Pfam" id="PF09291">
    <property type="entry name" value="DUF1968"/>
    <property type="match status" value="1"/>
</dbReference>
<dbReference type="SUPFAM" id="SSF48726">
    <property type="entry name" value="Immunoglobulin"/>
    <property type="match status" value="1"/>
</dbReference>
<reference key="1">
    <citation type="journal article" date="1984" name="Nature">
        <title>A third type of murine T-cell receptor gene.</title>
        <authorList>
            <person name="Chien Y."/>
            <person name="Becker D.M."/>
            <person name="Lindsten T."/>
            <person name="Okamura M."/>
            <person name="Cohen D.I."/>
            <person name="Davis M.M."/>
        </authorList>
    </citation>
    <scope>NUCLEOTIDE SEQUENCE [MRNA] (HYBRIDOMA 2B4)</scope>
</reference>
<reference key="2">
    <citation type="journal article" date="1984" name="Nature">
        <title>A third rearranged and expressed gene in a clone of cytotoxic T lymphocytes.</title>
        <authorList>
            <person name="Saito H."/>
            <person name="Kranz D.M."/>
            <person name="Takagaki Y."/>
            <person name="Hayday A.C."/>
            <person name="Eisen H.N."/>
            <person name="Tonegawa S."/>
        </authorList>
    </citation>
    <scope>NUCLEOTIDE SEQUENCE [MRNA] (CLONE PY14)</scope>
    <source>
        <strain>BALB.B</strain>
    </source>
</reference>
<reference key="3">
    <citation type="journal article" date="1994" name="J. Exp. Med.">
        <title>T cell receptor (TCR) usage determines disease susceptibility in experimental autoimmune encephalomyelitis: studies with TCR V beta 8.2 transgenic mice.</title>
        <authorList>
            <person name="Kuchroo V.K."/>
            <person name="Collins M."/>
            <person name="Al-Sabbagh A."/>
            <person name="Sobel R.A."/>
            <person name="Whitters M.J."/>
            <person name="Zamvil S.S."/>
            <person name="Dorf M.E."/>
            <person name="Hafler D.A."/>
            <person name="Seidman J.G."/>
            <person name="Weiner H.L."/>
            <person name="Rimm I.J."/>
        </authorList>
    </citation>
    <scope>NUCLEOTIDE SEQUENCE [MRNA] (HYBRIDOMA 2B4)</scope>
    <source>
        <strain>C57BL/6J</strain>
    </source>
</reference>
<reference key="4">
    <citation type="journal article" date="1986" name="Proc. Natl. Acad. Sci. U.S.A.">
        <title>Sequence and expression of transcripts of the T-cell antigen receptor alpha-chain gene in a functional, antigen-specific suppressor-T-cell hybridoma.</title>
        <authorList>
            <person name="Imai K."/>
            <person name="Kanno M."/>
            <person name="Kimoto H."/>
            <person name="Shigemoto K."/>
            <person name="Yamamoto S."/>
            <person name="Taniguchi M."/>
        </authorList>
    </citation>
    <scope>NUCLEOTIDE SEQUENCE [MRNA] (HYBRIDOMA 34S-281)</scope>
</reference>
<reference key="5">
    <citation type="journal article" date="2009" name="PLoS Biol.">
        <title>Lineage-specific biology revealed by a finished genome assembly of the mouse.</title>
        <authorList>
            <person name="Church D.M."/>
            <person name="Goodstadt L."/>
            <person name="Hillier L.W."/>
            <person name="Zody M.C."/>
            <person name="Goldstein S."/>
            <person name="She X."/>
            <person name="Bult C.J."/>
            <person name="Agarwala R."/>
            <person name="Cherry J.L."/>
            <person name="DiCuccio M."/>
            <person name="Hlavina W."/>
            <person name="Kapustin Y."/>
            <person name="Meric P."/>
            <person name="Maglott D."/>
            <person name="Birtle Z."/>
            <person name="Marques A.C."/>
            <person name="Graves T."/>
            <person name="Zhou S."/>
            <person name="Teague B."/>
            <person name="Potamousis K."/>
            <person name="Churas C."/>
            <person name="Place M."/>
            <person name="Herschleb J."/>
            <person name="Runnheim R."/>
            <person name="Forrest D."/>
            <person name="Amos-Landgraf J."/>
            <person name="Schwartz D.C."/>
            <person name="Cheng Z."/>
            <person name="Lindblad-Toh K."/>
            <person name="Eichler E.E."/>
            <person name="Ponting C.P."/>
        </authorList>
    </citation>
    <scope>NUCLEOTIDE SEQUENCE [LARGE SCALE GENOMIC DNA]</scope>
    <source>
        <strain>C57BL/6J</strain>
    </source>
</reference>
<keyword id="KW-0002">3D-structure</keyword>
<keyword id="KW-1064">Adaptive immunity</keyword>
<keyword id="KW-1003">Cell membrane</keyword>
<keyword id="KW-1015">Disulfide bond</keyword>
<keyword id="KW-0325">Glycoprotein</keyword>
<keyword id="KW-0391">Immunity</keyword>
<keyword id="KW-0472">Membrane</keyword>
<keyword id="KW-0675">Receptor</keyword>
<keyword id="KW-1185">Reference proteome</keyword>
<keyword id="KW-1279">T cell receptor</keyword>
<keyword id="KW-0812">Transmembrane</keyword>
<keyword id="KW-1133">Transmembrane helix</keyword>